<feature type="chain" id="PRO_0000238428" description="ATP synthase subunit alpha, chloroplastic">
    <location>
        <begin position="1"/>
        <end position="507"/>
    </location>
</feature>
<feature type="binding site" evidence="1">
    <location>
        <begin position="170"/>
        <end position="177"/>
    </location>
    <ligand>
        <name>ATP</name>
        <dbReference type="ChEBI" id="CHEBI:30616"/>
    </ligand>
</feature>
<feature type="site" description="Required for activity" evidence="1">
    <location>
        <position position="363"/>
    </location>
</feature>
<accession>Q33C53</accession>
<protein>
    <recommendedName>
        <fullName evidence="1">ATP synthase subunit alpha, chloroplastic</fullName>
        <ecNumber evidence="1">7.1.2.2</ecNumber>
    </recommendedName>
    <alternativeName>
        <fullName evidence="1">ATP synthase F1 sector subunit alpha</fullName>
    </alternativeName>
    <alternativeName>
        <fullName evidence="1">F-ATPase subunit alpha</fullName>
    </alternativeName>
</protein>
<dbReference type="EC" id="7.1.2.2" evidence="1"/>
<dbReference type="EMBL" id="AB240139">
    <property type="protein sequence ID" value="BAE47982.1"/>
    <property type="molecule type" value="Genomic_DNA"/>
</dbReference>
<dbReference type="RefSeq" id="YP_398844.1">
    <property type="nucleotide sequence ID" value="NC_007602.1"/>
</dbReference>
<dbReference type="SMR" id="Q33C53"/>
<dbReference type="GeneID" id="3776377"/>
<dbReference type="KEGG" id="nto:3776377"/>
<dbReference type="OrthoDB" id="1273573at2759"/>
<dbReference type="GO" id="GO:0009535">
    <property type="term" value="C:chloroplast thylakoid membrane"/>
    <property type="evidence" value="ECO:0007669"/>
    <property type="project" value="UniProtKB-SubCell"/>
</dbReference>
<dbReference type="GO" id="GO:0045259">
    <property type="term" value="C:proton-transporting ATP synthase complex"/>
    <property type="evidence" value="ECO:0007669"/>
    <property type="project" value="UniProtKB-KW"/>
</dbReference>
<dbReference type="GO" id="GO:0043531">
    <property type="term" value="F:ADP binding"/>
    <property type="evidence" value="ECO:0007669"/>
    <property type="project" value="TreeGrafter"/>
</dbReference>
<dbReference type="GO" id="GO:0005524">
    <property type="term" value="F:ATP binding"/>
    <property type="evidence" value="ECO:0007669"/>
    <property type="project" value="UniProtKB-UniRule"/>
</dbReference>
<dbReference type="GO" id="GO:0046933">
    <property type="term" value="F:proton-transporting ATP synthase activity, rotational mechanism"/>
    <property type="evidence" value="ECO:0007669"/>
    <property type="project" value="UniProtKB-UniRule"/>
</dbReference>
<dbReference type="CDD" id="cd18113">
    <property type="entry name" value="ATP-synt_F1_alpha_C"/>
    <property type="match status" value="1"/>
</dbReference>
<dbReference type="CDD" id="cd18116">
    <property type="entry name" value="ATP-synt_F1_alpha_N"/>
    <property type="match status" value="1"/>
</dbReference>
<dbReference type="CDD" id="cd01132">
    <property type="entry name" value="F1-ATPase_alpha_CD"/>
    <property type="match status" value="1"/>
</dbReference>
<dbReference type="FunFam" id="1.20.150.20:FF:000001">
    <property type="entry name" value="ATP synthase subunit alpha"/>
    <property type="match status" value="1"/>
</dbReference>
<dbReference type="FunFam" id="2.40.30.20:FF:000001">
    <property type="entry name" value="ATP synthase subunit alpha"/>
    <property type="match status" value="1"/>
</dbReference>
<dbReference type="FunFam" id="3.40.50.300:FF:000002">
    <property type="entry name" value="ATP synthase subunit alpha"/>
    <property type="match status" value="1"/>
</dbReference>
<dbReference type="Gene3D" id="2.40.30.20">
    <property type="match status" value="1"/>
</dbReference>
<dbReference type="Gene3D" id="1.20.150.20">
    <property type="entry name" value="ATP synthase alpha/beta chain, C-terminal domain"/>
    <property type="match status" value="1"/>
</dbReference>
<dbReference type="Gene3D" id="3.40.50.300">
    <property type="entry name" value="P-loop containing nucleotide triphosphate hydrolases"/>
    <property type="match status" value="1"/>
</dbReference>
<dbReference type="HAMAP" id="MF_01346">
    <property type="entry name" value="ATP_synth_alpha_bact"/>
    <property type="match status" value="1"/>
</dbReference>
<dbReference type="InterPro" id="IPR023366">
    <property type="entry name" value="ATP_synth_asu-like_sf"/>
</dbReference>
<dbReference type="InterPro" id="IPR000793">
    <property type="entry name" value="ATP_synth_asu_C"/>
</dbReference>
<dbReference type="InterPro" id="IPR038376">
    <property type="entry name" value="ATP_synth_asu_C_sf"/>
</dbReference>
<dbReference type="InterPro" id="IPR033732">
    <property type="entry name" value="ATP_synth_F1_a_nt-bd_dom"/>
</dbReference>
<dbReference type="InterPro" id="IPR005294">
    <property type="entry name" value="ATP_synth_F1_asu"/>
</dbReference>
<dbReference type="InterPro" id="IPR020003">
    <property type="entry name" value="ATPase_a/bsu_AS"/>
</dbReference>
<dbReference type="InterPro" id="IPR004100">
    <property type="entry name" value="ATPase_F1/V1/A1_a/bsu_N"/>
</dbReference>
<dbReference type="InterPro" id="IPR036121">
    <property type="entry name" value="ATPase_F1/V1/A1_a/bsu_N_sf"/>
</dbReference>
<dbReference type="InterPro" id="IPR000194">
    <property type="entry name" value="ATPase_F1/V1/A1_a/bsu_nucl-bd"/>
</dbReference>
<dbReference type="InterPro" id="IPR027417">
    <property type="entry name" value="P-loop_NTPase"/>
</dbReference>
<dbReference type="NCBIfam" id="TIGR00962">
    <property type="entry name" value="atpA"/>
    <property type="match status" value="1"/>
</dbReference>
<dbReference type="NCBIfam" id="NF009884">
    <property type="entry name" value="PRK13343.1"/>
    <property type="match status" value="1"/>
</dbReference>
<dbReference type="PANTHER" id="PTHR48082">
    <property type="entry name" value="ATP SYNTHASE SUBUNIT ALPHA, MITOCHONDRIAL"/>
    <property type="match status" value="1"/>
</dbReference>
<dbReference type="PANTHER" id="PTHR48082:SF2">
    <property type="entry name" value="ATP SYNTHASE SUBUNIT ALPHA, MITOCHONDRIAL"/>
    <property type="match status" value="1"/>
</dbReference>
<dbReference type="Pfam" id="PF00006">
    <property type="entry name" value="ATP-synt_ab"/>
    <property type="match status" value="1"/>
</dbReference>
<dbReference type="Pfam" id="PF00306">
    <property type="entry name" value="ATP-synt_ab_C"/>
    <property type="match status" value="1"/>
</dbReference>
<dbReference type="Pfam" id="PF02874">
    <property type="entry name" value="ATP-synt_ab_N"/>
    <property type="match status" value="1"/>
</dbReference>
<dbReference type="PIRSF" id="PIRSF039088">
    <property type="entry name" value="F_ATPase_subunit_alpha"/>
    <property type="match status" value="1"/>
</dbReference>
<dbReference type="SUPFAM" id="SSF47917">
    <property type="entry name" value="C-terminal domain of alpha and beta subunits of F1 ATP synthase"/>
    <property type="match status" value="1"/>
</dbReference>
<dbReference type="SUPFAM" id="SSF50615">
    <property type="entry name" value="N-terminal domain of alpha and beta subunits of F1 ATP synthase"/>
    <property type="match status" value="1"/>
</dbReference>
<dbReference type="SUPFAM" id="SSF52540">
    <property type="entry name" value="P-loop containing nucleoside triphosphate hydrolases"/>
    <property type="match status" value="1"/>
</dbReference>
<dbReference type="PROSITE" id="PS00152">
    <property type="entry name" value="ATPASE_ALPHA_BETA"/>
    <property type="match status" value="1"/>
</dbReference>
<sequence length="507" mass="55378">MVTIRADEISNIIRERIEQYNREVKVVNTGTVLQVGDGIARIHGLDEVMAGELVEFEEGTIGIALNLESNNVGVVLMGDGLLIQEGSSVKATGRIAQIPVSEAYLGRVINALAKPIDGRGEISASEFRLIESAAPGIISRRSVYEPLQTGLIAIDSMIPIGRGQRELIIGDRQTGKTAVATDTILNQQGQNVICVYVAIGQKASSVAQVVTTLQERGAMEYTIVVAETADSPATLQYLAPYTGAALAEYFMYRERHTLIIYDDPSKQAQAYRQMSLLLRRPPGREAYPGDVFYLHSRLLERAAKLSSSLGEGSMTALPIVETQSGDVSAYIPTNVISITDGQIFLSADLFNSGIRPAINVGISVSRVGSAAQIKAMKQVAGKLKLELAQFAELEAFAQFASDLDKATQNQLARGQRLRELLKQSQSAPLTVEEQIMTIYTGTNGYLDSLEVGQVRKFLVELRTYLKTNKPQFQEIISSTKTFTEEAEALLKEAIQEQTDRFILQEQA</sequence>
<evidence type="ECO:0000255" key="1">
    <source>
        <dbReference type="HAMAP-Rule" id="MF_01346"/>
    </source>
</evidence>
<proteinExistence type="inferred from homology"/>
<reference key="1">
    <citation type="journal article" date="2006" name="Mol. Genet. Genomics">
        <title>The chloroplast genome of Nicotiana sylvestris and Nicotiana tomentosiformis: complete sequencing confirms that the Nicotiana sylvestris progenitor is the maternal genome donor of Nicotiana tabacum.</title>
        <authorList>
            <person name="Yukawa M."/>
            <person name="Tsudzuki T."/>
            <person name="Sugiura M."/>
        </authorList>
    </citation>
    <scope>NUCLEOTIDE SEQUENCE [LARGE SCALE GENOMIC DNA]</scope>
</reference>
<organism>
    <name type="scientific">Nicotiana tomentosiformis</name>
    <name type="common">Tobacco</name>
    <dbReference type="NCBI Taxonomy" id="4098"/>
    <lineage>
        <taxon>Eukaryota</taxon>
        <taxon>Viridiplantae</taxon>
        <taxon>Streptophyta</taxon>
        <taxon>Embryophyta</taxon>
        <taxon>Tracheophyta</taxon>
        <taxon>Spermatophyta</taxon>
        <taxon>Magnoliopsida</taxon>
        <taxon>eudicotyledons</taxon>
        <taxon>Gunneridae</taxon>
        <taxon>Pentapetalae</taxon>
        <taxon>asterids</taxon>
        <taxon>lamiids</taxon>
        <taxon>Solanales</taxon>
        <taxon>Solanaceae</taxon>
        <taxon>Nicotianoideae</taxon>
        <taxon>Nicotianeae</taxon>
        <taxon>Nicotiana</taxon>
    </lineage>
</organism>
<keyword id="KW-0066">ATP synthesis</keyword>
<keyword id="KW-0067">ATP-binding</keyword>
<keyword id="KW-0139">CF(1)</keyword>
<keyword id="KW-0150">Chloroplast</keyword>
<keyword id="KW-0375">Hydrogen ion transport</keyword>
<keyword id="KW-0406">Ion transport</keyword>
<keyword id="KW-0472">Membrane</keyword>
<keyword id="KW-0547">Nucleotide-binding</keyword>
<keyword id="KW-0934">Plastid</keyword>
<keyword id="KW-0793">Thylakoid</keyword>
<keyword id="KW-1278">Translocase</keyword>
<keyword id="KW-0813">Transport</keyword>
<gene>
    <name evidence="1" type="primary">atpA</name>
</gene>
<comment type="function">
    <text evidence="1">Produces ATP from ADP in the presence of a proton gradient across the membrane. The alpha chain is a regulatory subunit.</text>
</comment>
<comment type="catalytic activity">
    <reaction evidence="1">
        <text>ATP + H2O + 4 H(+)(in) = ADP + phosphate + 5 H(+)(out)</text>
        <dbReference type="Rhea" id="RHEA:57720"/>
        <dbReference type="ChEBI" id="CHEBI:15377"/>
        <dbReference type="ChEBI" id="CHEBI:15378"/>
        <dbReference type="ChEBI" id="CHEBI:30616"/>
        <dbReference type="ChEBI" id="CHEBI:43474"/>
        <dbReference type="ChEBI" id="CHEBI:456216"/>
        <dbReference type="EC" id="7.1.2.2"/>
    </reaction>
</comment>
<comment type="subunit">
    <text evidence="1">F-type ATPases have 2 components, CF(1) - the catalytic core - and CF(0) - the membrane proton channel. CF(1) has five subunits: alpha(3), beta(3), gamma(1), delta(1), epsilon(1). CF(0) has four main subunits: a, b, b' and c.</text>
</comment>
<comment type="subcellular location">
    <subcellularLocation>
        <location evidence="1">Plastid</location>
        <location evidence="1">Chloroplast thylakoid membrane</location>
        <topology evidence="1">Peripheral membrane protein</topology>
    </subcellularLocation>
</comment>
<comment type="similarity">
    <text evidence="1">Belongs to the ATPase alpha/beta chains family.</text>
</comment>
<geneLocation type="chloroplast"/>
<name>ATPA_NICTO</name>